<reference key="1">
    <citation type="journal article" date="2005" name="Science">
        <title>Genome streamlining in a cosmopolitan oceanic bacterium.</title>
        <authorList>
            <person name="Giovannoni S.J."/>
            <person name="Tripp H.J."/>
            <person name="Givan S."/>
            <person name="Podar M."/>
            <person name="Vergin K.L."/>
            <person name="Baptista D."/>
            <person name="Bibbs L."/>
            <person name="Eads J."/>
            <person name="Richardson T.H."/>
            <person name="Noordewier M."/>
            <person name="Rappe M.S."/>
            <person name="Short J.M."/>
            <person name="Carrington J.C."/>
            <person name="Mathur E.J."/>
        </authorList>
    </citation>
    <scope>NUCLEOTIDE SEQUENCE [LARGE SCALE GENOMIC DNA]</scope>
    <source>
        <strain>HTCC1062</strain>
    </source>
</reference>
<proteinExistence type="inferred from homology"/>
<evidence type="ECO:0000255" key="1">
    <source>
        <dbReference type="HAMAP-Rule" id="MF_00101"/>
    </source>
</evidence>
<dbReference type="EC" id="2.7.8.7" evidence="1"/>
<dbReference type="EMBL" id="CP000084">
    <property type="protein sequence ID" value="AAZ21861.1"/>
    <property type="molecule type" value="Genomic_DNA"/>
</dbReference>
<dbReference type="RefSeq" id="WP_006996870.1">
    <property type="nucleotide sequence ID" value="NC_007205.1"/>
</dbReference>
<dbReference type="SMR" id="Q4FLS7"/>
<dbReference type="STRING" id="335992.SAR11_1055"/>
<dbReference type="GeneID" id="66295546"/>
<dbReference type="KEGG" id="pub:SAR11_1055"/>
<dbReference type="eggNOG" id="COG0736">
    <property type="taxonomic scope" value="Bacteria"/>
</dbReference>
<dbReference type="HOGENOM" id="CLU_089696_0_2_5"/>
<dbReference type="OrthoDB" id="517356at2"/>
<dbReference type="Proteomes" id="UP000002528">
    <property type="component" value="Chromosome"/>
</dbReference>
<dbReference type="GO" id="GO:0005737">
    <property type="term" value="C:cytoplasm"/>
    <property type="evidence" value="ECO:0007669"/>
    <property type="project" value="UniProtKB-SubCell"/>
</dbReference>
<dbReference type="GO" id="GO:0008897">
    <property type="term" value="F:holo-[acyl-carrier-protein] synthase activity"/>
    <property type="evidence" value="ECO:0007669"/>
    <property type="project" value="UniProtKB-UniRule"/>
</dbReference>
<dbReference type="GO" id="GO:0000287">
    <property type="term" value="F:magnesium ion binding"/>
    <property type="evidence" value="ECO:0007669"/>
    <property type="project" value="UniProtKB-UniRule"/>
</dbReference>
<dbReference type="GO" id="GO:0006633">
    <property type="term" value="P:fatty acid biosynthetic process"/>
    <property type="evidence" value="ECO:0007669"/>
    <property type="project" value="UniProtKB-UniRule"/>
</dbReference>
<dbReference type="Gene3D" id="3.90.470.20">
    <property type="entry name" value="4'-phosphopantetheinyl transferase domain"/>
    <property type="match status" value="1"/>
</dbReference>
<dbReference type="HAMAP" id="MF_00101">
    <property type="entry name" value="AcpS"/>
    <property type="match status" value="1"/>
</dbReference>
<dbReference type="InterPro" id="IPR008278">
    <property type="entry name" value="4-PPantetheinyl_Trfase_dom"/>
</dbReference>
<dbReference type="InterPro" id="IPR037143">
    <property type="entry name" value="4-PPantetheinyl_Trfase_dom_sf"/>
</dbReference>
<dbReference type="InterPro" id="IPR002582">
    <property type="entry name" value="ACPS"/>
</dbReference>
<dbReference type="InterPro" id="IPR004568">
    <property type="entry name" value="Ppantetheine-prot_Trfase_dom"/>
</dbReference>
<dbReference type="NCBIfam" id="TIGR00516">
    <property type="entry name" value="acpS"/>
    <property type="match status" value="1"/>
</dbReference>
<dbReference type="NCBIfam" id="TIGR00556">
    <property type="entry name" value="pantethn_trn"/>
    <property type="match status" value="1"/>
</dbReference>
<dbReference type="Pfam" id="PF01648">
    <property type="entry name" value="ACPS"/>
    <property type="match status" value="1"/>
</dbReference>
<dbReference type="SUPFAM" id="SSF56214">
    <property type="entry name" value="4'-phosphopantetheinyl transferase"/>
    <property type="match status" value="1"/>
</dbReference>
<feature type="chain" id="PRO_0000228295" description="Holo-[acyl-carrier-protein] synthase">
    <location>
        <begin position="1"/>
        <end position="128"/>
    </location>
</feature>
<feature type="binding site" evidence="1">
    <location>
        <position position="9"/>
    </location>
    <ligand>
        <name>Mg(2+)</name>
        <dbReference type="ChEBI" id="CHEBI:18420"/>
    </ligand>
</feature>
<feature type="binding site" evidence="1">
    <location>
        <position position="56"/>
    </location>
    <ligand>
        <name>Mg(2+)</name>
        <dbReference type="ChEBI" id="CHEBI:18420"/>
    </ligand>
</feature>
<name>ACPS_PELUB</name>
<organism>
    <name type="scientific">Pelagibacter ubique (strain HTCC1062)</name>
    <dbReference type="NCBI Taxonomy" id="335992"/>
    <lineage>
        <taxon>Bacteria</taxon>
        <taxon>Pseudomonadati</taxon>
        <taxon>Pseudomonadota</taxon>
        <taxon>Alphaproteobacteria</taxon>
        <taxon>Candidatus Pelagibacterales</taxon>
        <taxon>Candidatus Pelagibacteraceae</taxon>
        <taxon>Candidatus Pelagibacter</taxon>
    </lineage>
</organism>
<sequence length="128" mass="14714">MKILGIGVDIVENIRIHKSLKNVNFIKRVFSSSEILLAKKITNKKSFYSKRFAAKEAFSKAIGTGFRENLNFKDITVINDKLGKPSFVVTDKIKKIVKKRFKISSFNFFLSISDEKKYSVAYVILQKK</sequence>
<protein>
    <recommendedName>
        <fullName evidence="1">Holo-[acyl-carrier-protein] synthase</fullName>
        <shortName evidence="1">Holo-ACP synthase</shortName>
        <ecNumber evidence="1">2.7.8.7</ecNumber>
    </recommendedName>
    <alternativeName>
        <fullName evidence="1">4'-phosphopantetheinyl transferase AcpS</fullName>
    </alternativeName>
</protein>
<accession>Q4FLS7</accession>
<gene>
    <name evidence="1" type="primary">acpS</name>
    <name type="ordered locus">SAR11_1055</name>
</gene>
<keyword id="KW-0963">Cytoplasm</keyword>
<keyword id="KW-0275">Fatty acid biosynthesis</keyword>
<keyword id="KW-0276">Fatty acid metabolism</keyword>
<keyword id="KW-0444">Lipid biosynthesis</keyword>
<keyword id="KW-0443">Lipid metabolism</keyword>
<keyword id="KW-0460">Magnesium</keyword>
<keyword id="KW-0479">Metal-binding</keyword>
<keyword id="KW-1185">Reference proteome</keyword>
<keyword id="KW-0808">Transferase</keyword>
<comment type="function">
    <text evidence="1">Transfers the 4'-phosphopantetheine moiety from coenzyme A to a Ser of acyl-carrier-protein.</text>
</comment>
<comment type="catalytic activity">
    <reaction evidence="1">
        <text>apo-[ACP] + CoA = holo-[ACP] + adenosine 3',5'-bisphosphate + H(+)</text>
        <dbReference type="Rhea" id="RHEA:12068"/>
        <dbReference type="Rhea" id="RHEA-COMP:9685"/>
        <dbReference type="Rhea" id="RHEA-COMP:9690"/>
        <dbReference type="ChEBI" id="CHEBI:15378"/>
        <dbReference type="ChEBI" id="CHEBI:29999"/>
        <dbReference type="ChEBI" id="CHEBI:57287"/>
        <dbReference type="ChEBI" id="CHEBI:58343"/>
        <dbReference type="ChEBI" id="CHEBI:64479"/>
        <dbReference type="EC" id="2.7.8.7"/>
    </reaction>
</comment>
<comment type="cofactor">
    <cofactor evidence="1">
        <name>Mg(2+)</name>
        <dbReference type="ChEBI" id="CHEBI:18420"/>
    </cofactor>
</comment>
<comment type="subcellular location">
    <subcellularLocation>
        <location evidence="1">Cytoplasm</location>
    </subcellularLocation>
</comment>
<comment type="similarity">
    <text evidence="1">Belongs to the P-Pant transferase superfamily. AcpS family.</text>
</comment>